<proteinExistence type="evidence at transcript level"/>
<keyword id="KW-0067">ATP-binding</keyword>
<keyword id="KW-0868">Chloride</keyword>
<keyword id="KW-0963">Cytoplasm</keyword>
<keyword id="KW-0206">Cytoskeleton</keyword>
<keyword id="KW-0418">Kinase</keyword>
<keyword id="KW-0547">Nucleotide-binding</keyword>
<keyword id="KW-0539">Nucleus</keyword>
<keyword id="KW-0597">Phosphoprotein</keyword>
<keyword id="KW-1185">Reference proteome</keyword>
<keyword id="KW-0723">Serine/threonine-protein kinase</keyword>
<keyword id="KW-0808">Transferase</keyword>
<keyword id="KW-0832">Ubl conjugation</keyword>
<dbReference type="EC" id="2.7.11.1" evidence="3"/>
<dbReference type="EMBL" id="CU463193">
    <property type="status" value="NOT_ANNOTATED_CDS"/>
    <property type="molecule type" value="Genomic_DNA"/>
</dbReference>
<dbReference type="EMBL" id="CU915332">
    <property type="status" value="NOT_ANNOTATED_CDS"/>
    <property type="molecule type" value="Genomic_DNA"/>
</dbReference>
<dbReference type="EMBL" id="FP340582">
    <property type="status" value="NOT_ANNOTATED_CDS"/>
    <property type="molecule type" value="Genomic_DNA"/>
</dbReference>
<dbReference type="EMBL" id="AY517853">
    <property type="protein sequence ID" value="AAS86809.1"/>
    <property type="status" value="ALT_SEQ"/>
    <property type="molecule type" value="mRNA"/>
</dbReference>
<dbReference type="SMR" id="Q6R2V0"/>
<dbReference type="FunCoup" id="Q6R2V0">
    <property type="interactions" value="1310"/>
</dbReference>
<dbReference type="STRING" id="9823.ENSSSCP00000042408"/>
<dbReference type="GlyGen" id="Q6R2V0">
    <property type="glycosylation" value="10 sites"/>
</dbReference>
<dbReference type="PaxDb" id="9823-ENSSSCP00000000801"/>
<dbReference type="Ensembl" id="ENSSSCT00040102601.1">
    <property type="protein sequence ID" value="ENSSSCP00040046393.1"/>
    <property type="gene ID" value="ENSSSCG00040074009.1"/>
</dbReference>
<dbReference type="eggNOG" id="KOG0584">
    <property type="taxonomic scope" value="Eukaryota"/>
</dbReference>
<dbReference type="InParanoid" id="Q6R2V0"/>
<dbReference type="TreeFam" id="TF315363"/>
<dbReference type="Proteomes" id="UP000008227">
    <property type="component" value="Unplaced"/>
</dbReference>
<dbReference type="Proteomes" id="UP000314985">
    <property type="component" value="Unplaced"/>
</dbReference>
<dbReference type="Proteomes" id="UP000694570">
    <property type="component" value="Unplaced"/>
</dbReference>
<dbReference type="Proteomes" id="UP000694571">
    <property type="component" value="Unplaced"/>
</dbReference>
<dbReference type="Proteomes" id="UP000694720">
    <property type="component" value="Unplaced"/>
</dbReference>
<dbReference type="Proteomes" id="UP000694722">
    <property type="component" value="Unplaced"/>
</dbReference>
<dbReference type="Proteomes" id="UP000694723">
    <property type="component" value="Unplaced"/>
</dbReference>
<dbReference type="Proteomes" id="UP000694724">
    <property type="component" value="Unplaced"/>
</dbReference>
<dbReference type="Proteomes" id="UP000694725">
    <property type="component" value="Unplaced"/>
</dbReference>
<dbReference type="Proteomes" id="UP000694726">
    <property type="component" value="Unplaced"/>
</dbReference>
<dbReference type="Proteomes" id="UP000694727">
    <property type="component" value="Unplaced"/>
</dbReference>
<dbReference type="Proteomes" id="UP000694728">
    <property type="component" value="Unplaced"/>
</dbReference>
<dbReference type="GO" id="GO:0005737">
    <property type="term" value="C:cytoplasm"/>
    <property type="evidence" value="ECO:0000318"/>
    <property type="project" value="GO_Central"/>
</dbReference>
<dbReference type="GO" id="GO:0005829">
    <property type="term" value="C:cytosol"/>
    <property type="evidence" value="ECO:0000318"/>
    <property type="project" value="GO_Central"/>
</dbReference>
<dbReference type="GO" id="GO:0043232">
    <property type="term" value="C:intracellular membraneless organelle"/>
    <property type="evidence" value="ECO:0000250"/>
    <property type="project" value="UniProtKB"/>
</dbReference>
<dbReference type="GO" id="GO:0072686">
    <property type="term" value="C:mitotic spindle"/>
    <property type="evidence" value="ECO:0000250"/>
    <property type="project" value="UniProtKB"/>
</dbReference>
<dbReference type="GO" id="GO:0005634">
    <property type="term" value="C:nucleus"/>
    <property type="evidence" value="ECO:0000250"/>
    <property type="project" value="UniProtKB"/>
</dbReference>
<dbReference type="GO" id="GO:0005524">
    <property type="term" value="F:ATP binding"/>
    <property type="evidence" value="ECO:0007669"/>
    <property type="project" value="UniProtKB-KW"/>
</dbReference>
<dbReference type="GO" id="GO:0140693">
    <property type="term" value="F:molecular condensate scaffold activity"/>
    <property type="evidence" value="ECO:0000250"/>
    <property type="project" value="UniProtKB"/>
</dbReference>
<dbReference type="GO" id="GO:0019902">
    <property type="term" value="F:phosphatase binding"/>
    <property type="evidence" value="ECO:0000250"/>
    <property type="project" value="UniProtKB"/>
</dbReference>
<dbReference type="GO" id="GO:0019870">
    <property type="term" value="F:potassium channel inhibitor activity"/>
    <property type="evidence" value="ECO:0000318"/>
    <property type="project" value="GO_Central"/>
</dbReference>
<dbReference type="GO" id="GO:0106310">
    <property type="term" value="F:protein serine kinase activity"/>
    <property type="evidence" value="ECO:0007669"/>
    <property type="project" value="RHEA"/>
</dbReference>
<dbReference type="GO" id="GO:0004674">
    <property type="term" value="F:protein serine/threonine kinase activity"/>
    <property type="evidence" value="ECO:0000250"/>
    <property type="project" value="UniProtKB"/>
</dbReference>
<dbReference type="GO" id="GO:0006884">
    <property type="term" value="P:cell volume homeostasis"/>
    <property type="evidence" value="ECO:0000250"/>
    <property type="project" value="UniProtKB"/>
</dbReference>
<dbReference type="GO" id="GO:0071474">
    <property type="term" value="P:cellular hyperosmotic response"/>
    <property type="evidence" value="ECO:0000250"/>
    <property type="project" value="UniProtKB"/>
</dbReference>
<dbReference type="GO" id="GO:0035556">
    <property type="term" value="P:intracellular signal transduction"/>
    <property type="evidence" value="ECO:0000318"/>
    <property type="project" value="GO_Central"/>
</dbReference>
<dbReference type="GO" id="GO:0140694">
    <property type="term" value="P:membraneless organelle assembly"/>
    <property type="evidence" value="ECO:0000250"/>
    <property type="project" value="UniProtKB"/>
</dbReference>
<dbReference type="GO" id="GO:0050801">
    <property type="term" value="P:monoatomic ion homeostasis"/>
    <property type="evidence" value="ECO:0000318"/>
    <property type="project" value="GO_Central"/>
</dbReference>
<dbReference type="GO" id="GO:0010507">
    <property type="term" value="P:negative regulation of autophagy"/>
    <property type="evidence" value="ECO:0000250"/>
    <property type="project" value="UniProtKB"/>
</dbReference>
<dbReference type="GO" id="GO:1903077">
    <property type="term" value="P:negative regulation of protein localization to plasma membrane"/>
    <property type="evidence" value="ECO:0000250"/>
    <property type="project" value="UniProtKB"/>
</dbReference>
<dbReference type="GO" id="GO:0031397">
    <property type="term" value="P:negative regulation of protein ubiquitination"/>
    <property type="evidence" value="ECO:0000250"/>
    <property type="project" value="UniProtKB"/>
</dbReference>
<dbReference type="GO" id="GO:0010766">
    <property type="term" value="P:negative regulation of sodium ion transport"/>
    <property type="evidence" value="ECO:0000318"/>
    <property type="project" value="GO_Central"/>
</dbReference>
<dbReference type="GO" id="GO:0045766">
    <property type="term" value="P:positive regulation of angiogenesis"/>
    <property type="evidence" value="ECO:0000250"/>
    <property type="project" value="UniProtKB"/>
</dbReference>
<dbReference type="GO" id="GO:1903490">
    <property type="term" value="P:positive regulation of mitotic cytokinesis"/>
    <property type="evidence" value="ECO:0000250"/>
    <property type="project" value="UniProtKB"/>
</dbReference>
<dbReference type="GO" id="GO:1903288">
    <property type="term" value="P:positive regulation of potassium ion import across plasma membrane"/>
    <property type="evidence" value="ECO:0000318"/>
    <property type="project" value="GO_Central"/>
</dbReference>
<dbReference type="GO" id="GO:1904595">
    <property type="term" value="P:positive regulation of termination of RNA polymerase II transcription"/>
    <property type="evidence" value="ECO:0000250"/>
    <property type="project" value="UniProtKB"/>
</dbReference>
<dbReference type="GO" id="GO:0045050">
    <property type="term" value="P:protein insertion into ER membrane by stop-transfer membrane-anchor sequence"/>
    <property type="evidence" value="ECO:0000250"/>
    <property type="project" value="UniProtKB"/>
</dbReference>
<dbReference type="GO" id="GO:0010793">
    <property type="term" value="P:regulation of mRNA export from nucleus"/>
    <property type="evidence" value="ECO:0000250"/>
    <property type="project" value="UniProtKB"/>
</dbReference>
<dbReference type="CDD" id="cd14030">
    <property type="entry name" value="STKc_WNK1"/>
    <property type="match status" value="1"/>
</dbReference>
<dbReference type="FunFam" id="3.10.20.90:FF:000007">
    <property type="entry name" value="Serine/threonine-protein kinase WNK1 isoform 1"/>
    <property type="match status" value="1"/>
</dbReference>
<dbReference type="FunFam" id="1.10.510.10:FF:000006">
    <property type="entry name" value="Serine/threonine-protein kinase WNK1 isoform 2"/>
    <property type="match status" value="1"/>
</dbReference>
<dbReference type="FunFam" id="3.10.20.90:FF:000012">
    <property type="entry name" value="Serine/threonine-protein kinase WNK1 isoform 2"/>
    <property type="match status" value="1"/>
</dbReference>
<dbReference type="FunFam" id="3.30.200.20:FF:000494">
    <property type="entry name" value="serine/threonine-protein kinase WNK2 isoform X2"/>
    <property type="match status" value="1"/>
</dbReference>
<dbReference type="Gene3D" id="3.10.20.90">
    <property type="entry name" value="Phosphatidylinositol 3-kinase Catalytic Subunit, Chain A, domain 1"/>
    <property type="match status" value="2"/>
</dbReference>
<dbReference type="Gene3D" id="3.30.200.20">
    <property type="entry name" value="Phosphorylase Kinase, domain 1"/>
    <property type="match status" value="1"/>
</dbReference>
<dbReference type="Gene3D" id="1.10.510.10">
    <property type="entry name" value="Transferase(Phosphotransferase) domain 1"/>
    <property type="match status" value="1"/>
</dbReference>
<dbReference type="InterPro" id="IPR056865">
    <property type="entry name" value="CCTL2_WNK"/>
</dbReference>
<dbReference type="InterPro" id="IPR011009">
    <property type="entry name" value="Kinase-like_dom_sf"/>
</dbReference>
<dbReference type="InterPro" id="IPR024678">
    <property type="entry name" value="Kinase_OSR1/WNK_CCT"/>
</dbReference>
<dbReference type="InterPro" id="IPR000719">
    <property type="entry name" value="Prot_kinase_dom"/>
</dbReference>
<dbReference type="InterPro" id="IPR008271">
    <property type="entry name" value="Ser/Thr_kinase_AS"/>
</dbReference>
<dbReference type="InterPro" id="IPR050588">
    <property type="entry name" value="WNK_Ser-Thr_kinase"/>
</dbReference>
<dbReference type="PANTHER" id="PTHR13902">
    <property type="entry name" value="SERINE/THREONINE-PROTEIN KINASE WNK WITH NO LYSINE -RELATED"/>
    <property type="match status" value="1"/>
</dbReference>
<dbReference type="Pfam" id="PF24889">
    <property type="entry name" value="CCTL2_WNK"/>
    <property type="match status" value="1"/>
</dbReference>
<dbReference type="Pfam" id="PF12202">
    <property type="entry name" value="OSR1_C"/>
    <property type="match status" value="1"/>
</dbReference>
<dbReference type="Pfam" id="PF00069">
    <property type="entry name" value="Pkinase"/>
    <property type="match status" value="1"/>
</dbReference>
<dbReference type="SMART" id="SM00220">
    <property type="entry name" value="S_TKc"/>
    <property type="match status" value="1"/>
</dbReference>
<dbReference type="SUPFAM" id="SSF56112">
    <property type="entry name" value="Protein kinase-like (PK-like)"/>
    <property type="match status" value="1"/>
</dbReference>
<dbReference type="PROSITE" id="PS50011">
    <property type="entry name" value="PROTEIN_KINASE_DOM"/>
    <property type="match status" value="1"/>
</dbReference>
<dbReference type="PROSITE" id="PS00108">
    <property type="entry name" value="PROTEIN_KINASE_ST"/>
    <property type="match status" value="1"/>
</dbReference>
<feature type="chain" id="PRO_0000223947" description="Serine/threonine-protein kinase WNK1">
    <location>
        <begin position="1"/>
        <end position="2376"/>
    </location>
</feature>
<feature type="domain" description="Protein kinase" evidence="5">
    <location>
        <begin position="219"/>
        <end position="477"/>
    </location>
</feature>
<feature type="region of interest" description="Disordered" evidence="6">
    <location>
        <begin position="1"/>
        <end position="78"/>
    </location>
</feature>
<feature type="region of interest" description="Disordered" evidence="6">
    <location>
        <begin position="93"/>
        <end position="201"/>
    </location>
</feature>
<feature type="region of interest" description="Autoinhibitory domain" evidence="4">
    <location>
        <begin position="486"/>
        <end position="553"/>
    </location>
</feature>
<feature type="region of interest" description="Disordered" evidence="6">
    <location>
        <begin position="571"/>
        <end position="641"/>
    </location>
</feature>
<feature type="region of interest" description="Interaction with KLHL3" evidence="2">
    <location>
        <begin position="627"/>
        <end position="637"/>
    </location>
</feature>
<feature type="region of interest" description="Disordered" evidence="6">
    <location>
        <begin position="701"/>
        <end position="799"/>
    </location>
</feature>
<feature type="region of interest" description="Disordered" evidence="6">
    <location>
        <begin position="1026"/>
        <end position="1118"/>
    </location>
</feature>
<feature type="region of interest" description="Disordered" evidence="6">
    <location>
        <begin position="1459"/>
        <end position="1478"/>
    </location>
</feature>
<feature type="region of interest" description="Disordered" evidence="6">
    <location>
        <begin position="1734"/>
        <end position="1770"/>
    </location>
</feature>
<feature type="region of interest" description="Disordered" evidence="6">
    <location>
        <begin position="1862"/>
        <end position="1942"/>
    </location>
</feature>
<feature type="region of interest" description="Disordered" evidence="6">
    <location>
        <begin position="1991"/>
        <end position="2033"/>
    </location>
</feature>
<feature type="region of interest" description="Disordered" evidence="6">
    <location>
        <begin position="2110"/>
        <end position="2239"/>
    </location>
</feature>
<feature type="region of interest" description="Amphipathic alpha-helix" evidence="3">
    <location>
        <begin position="2235"/>
        <end position="2255"/>
    </location>
</feature>
<feature type="short sequence motif" description="RFXV motif 1" evidence="3">
    <location>
        <begin position="1257"/>
        <end position="1260"/>
    </location>
</feature>
<feature type="short sequence motif" description="RFXV motif 2" evidence="3">
    <location>
        <begin position="1853"/>
        <end position="1856"/>
    </location>
</feature>
<feature type="short sequence motif" description="RFXV motif 3" evidence="3">
    <location>
        <begin position="1939"/>
        <end position="1942"/>
    </location>
</feature>
<feature type="short sequence motif" description="RFXV motif 4" evidence="3">
    <location>
        <begin position="1951"/>
        <end position="1954"/>
    </location>
</feature>
<feature type="compositionally biased region" description="Low complexity" evidence="6">
    <location>
        <begin position="10"/>
        <end position="19"/>
    </location>
</feature>
<feature type="compositionally biased region" description="Low complexity" evidence="6">
    <location>
        <begin position="40"/>
        <end position="49"/>
    </location>
</feature>
<feature type="compositionally biased region" description="Basic and acidic residues" evidence="6">
    <location>
        <begin position="50"/>
        <end position="66"/>
    </location>
</feature>
<feature type="compositionally biased region" description="Low complexity" evidence="6">
    <location>
        <begin position="125"/>
        <end position="158"/>
    </location>
</feature>
<feature type="compositionally biased region" description="Basic and acidic residues" evidence="6">
    <location>
        <begin position="571"/>
        <end position="586"/>
    </location>
</feature>
<feature type="compositionally biased region" description="Low complexity" evidence="6">
    <location>
        <begin position="587"/>
        <end position="601"/>
    </location>
</feature>
<feature type="compositionally biased region" description="Low complexity" evidence="6">
    <location>
        <begin position="614"/>
        <end position="624"/>
    </location>
</feature>
<feature type="compositionally biased region" description="Low complexity" evidence="6">
    <location>
        <begin position="708"/>
        <end position="752"/>
    </location>
</feature>
<feature type="compositionally biased region" description="Polar residues" evidence="6">
    <location>
        <begin position="753"/>
        <end position="766"/>
    </location>
</feature>
<feature type="compositionally biased region" description="Pro residues" evidence="6">
    <location>
        <begin position="1045"/>
        <end position="1057"/>
    </location>
</feature>
<feature type="compositionally biased region" description="Polar residues" evidence="6">
    <location>
        <begin position="1079"/>
        <end position="1089"/>
    </location>
</feature>
<feature type="compositionally biased region" description="Basic residues" evidence="6">
    <location>
        <begin position="1097"/>
        <end position="1118"/>
    </location>
</feature>
<feature type="compositionally biased region" description="Pro residues" evidence="6">
    <location>
        <begin position="1746"/>
        <end position="1756"/>
    </location>
</feature>
<feature type="compositionally biased region" description="Basic and acidic residues" evidence="6">
    <location>
        <begin position="1862"/>
        <end position="1878"/>
    </location>
</feature>
<feature type="compositionally biased region" description="Low complexity" evidence="6">
    <location>
        <begin position="1881"/>
        <end position="1899"/>
    </location>
</feature>
<feature type="compositionally biased region" description="Basic residues" evidence="6">
    <location>
        <begin position="2116"/>
        <end position="2128"/>
    </location>
</feature>
<feature type="compositionally biased region" description="Low complexity" evidence="6">
    <location>
        <begin position="2129"/>
        <end position="2141"/>
    </location>
</feature>
<feature type="compositionally biased region" description="Polar residues" evidence="6">
    <location>
        <begin position="2146"/>
        <end position="2161"/>
    </location>
</feature>
<feature type="compositionally biased region" description="Polar residues" evidence="6">
    <location>
        <begin position="2169"/>
        <end position="2193"/>
    </location>
</feature>
<feature type="compositionally biased region" description="Low complexity" evidence="6">
    <location>
        <begin position="2207"/>
        <end position="2223"/>
    </location>
</feature>
<feature type="compositionally biased region" description="Polar residues" evidence="6">
    <location>
        <begin position="2224"/>
        <end position="2238"/>
    </location>
</feature>
<feature type="active site" description="Proton acceptor" evidence="4">
    <location>
        <position position="366"/>
    </location>
</feature>
<feature type="binding site" evidence="3">
    <location>
        <position position="229"/>
    </location>
    <ligand>
        <name>ATP</name>
        <dbReference type="ChEBI" id="CHEBI:30616"/>
    </ligand>
</feature>
<feature type="binding site" evidence="4">
    <location>
        <position position="281"/>
    </location>
    <ligand>
        <name>chloride</name>
        <dbReference type="ChEBI" id="CHEBI:17996"/>
    </ligand>
</feature>
<feature type="binding site" evidence="4">
    <location>
        <position position="297"/>
    </location>
    <ligand>
        <name>chloride</name>
        <dbReference type="ChEBI" id="CHEBI:17996"/>
    </ligand>
</feature>
<feature type="binding site" evidence="3">
    <location>
        <begin position="299"/>
        <end position="302"/>
    </location>
    <ligand>
        <name>ATP</name>
        <dbReference type="ChEBI" id="CHEBI:30616"/>
    </ligand>
</feature>
<feature type="binding site" evidence="3">
    <location>
        <position position="349"/>
    </location>
    <ligand>
        <name>ATP</name>
        <dbReference type="ChEBI" id="CHEBI:30616"/>
    </ligand>
</feature>
<feature type="binding site" evidence="4">
    <location>
        <position position="367"/>
    </location>
    <ligand>
        <name>chloride</name>
        <dbReference type="ChEBI" id="CHEBI:17996"/>
    </ligand>
</feature>
<feature type="binding site" evidence="4">
    <location>
        <position position="369"/>
    </location>
    <ligand>
        <name>chloride</name>
        <dbReference type="ChEBI" id="CHEBI:17996"/>
    </ligand>
</feature>
<feature type="modified residue" description="Phosphoserine" evidence="3">
    <location>
        <position position="15"/>
    </location>
</feature>
<feature type="modified residue" description="Phosphoserine" evidence="3">
    <location>
        <position position="19"/>
    </location>
</feature>
<feature type="modified residue" description="Phosphothreonine" evidence="4">
    <location>
        <position position="60"/>
    </location>
</feature>
<feature type="modified residue" description="Phosphoserine" evidence="3">
    <location>
        <position position="172"/>
    </location>
</feature>
<feature type="modified residue" description="Phosphoserine; by autocatalysis" evidence="4">
    <location>
        <position position="376"/>
    </location>
</feature>
<feature type="modified residue" description="Phosphoserine; by autocatalysis" evidence="4">
    <location>
        <position position="380"/>
    </location>
</feature>
<feature type="modified residue" description="Phosphoserine" evidence="3">
    <location>
        <position position="1261"/>
    </location>
</feature>
<feature type="modified residue" description="Phosphoserine" evidence="3">
    <location>
        <position position="1972"/>
    </location>
</feature>
<feature type="modified residue" description="Phosphoserine" evidence="3">
    <location>
        <position position="1996"/>
    </location>
</feature>
<feature type="modified residue" description="Phosphoserine" evidence="3">
    <location>
        <position position="2005"/>
    </location>
</feature>
<feature type="modified residue" description="Phosphoserine" evidence="3">
    <location>
        <position position="2006"/>
    </location>
</feature>
<feature type="modified residue" description="Phosphoserine" evidence="3">
    <location>
        <position position="2021"/>
    </location>
</feature>
<feature type="modified residue" description="Phosphoserine" evidence="3">
    <location>
        <position position="2023"/>
    </location>
</feature>
<feature type="modified residue" description="Phosphoserine" evidence="3">
    <location>
        <position position="2026"/>
    </location>
</feature>
<feature type="modified residue" description="Phosphoserine" evidence="1">
    <location>
        <position position="2264"/>
    </location>
</feature>
<feature type="modified residue" description="Phosphoserine" evidence="1">
    <location>
        <position position="2280"/>
    </location>
</feature>
<feature type="modified residue" description="Phosphoserine" evidence="3">
    <location>
        <position position="2364"/>
    </location>
</feature>
<feature type="modified residue" description="Phosphoserine" evidence="3">
    <location>
        <position position="2366"/>
    </location>
</feature>
<reference key="1">
    <citation type="submission" date="2009-11" db="EMBL/GenBank/DDBJ databases">
        <authorList>
            <consortium name="Porcine genome sequencing project"/>
        </authorList>
    </citation>
    <scope>NUCLEOTIDE SEQUENCE [LARGE SCALE GENOMIC DNA]</scope>
    <source>
        <strain>Duroc</strain>
    </source>
</reference>
<reference key="2">
    <citation type="journal article" date="2004" name="Am. J. Hum. Genet.">
        <title>Identification of a novel gene (HSN2) causing hereditary sensory and autonomic neuropathy type II through the study of Canadian genetic isolates.</title>
        <authorList>
            <person name="Lafreniere R.G."/>
            <person name="MacDonald M.L.E."/>
            <person name="Dube M.-P."/>
            <person name="MacFarlane J."/>
            <person name="O'Driscoll M."/>
            <person name="Brais B."/>
            <person name="Meilleur S."/>
            <person name="Brinkman R.R."/>
            <person name="Dadivas O."/>
            <person name="Pape T."/>
            <person name="Platon C."/>
            <person name="Radomski C."/>
            <person name="Risler J."/>
            <person name="Thompson J."/>
            <person name="Guerra-Escobio A.-M."/>
            <person name="Davar G."/>
            <person name="Breakefield X.O."/>
            <person name="Pimstone S.N."/>
            <person name="Green R."/>
            <person name="Pryse-Phillips W."/>
            <person name="Goldberg Y.P."/>
            <person name="Younghusband H.B."/>
            <person name="Hayden M.R."/>
            <person name="Sherrington R."/>
            <person name="Rouleau G.A."/>
            <person name="Samuels M.E."/>
        </authorList>
    </citation>
    <scope>NUCLEOTIDE SEQUENCE [MRNA]</scope>
</reference>
<comment type="function">
    <text evidence="1 3 4">Serine/threonine-protein kinase component of the WNK1-SPAK/OSR1 kinase cascade, which acts as a key regulator of blood pressure and regulatory volume increase by promoting ion influx. WNK1 mediates regulatory volume increase in response to hyperosmotic stress by acting as a molecular crowding sensor, which senses cell shrinkage and mediates formation of a membraneless compartment by undergoing liquid-liquid phase separation. The membraneless compartment concentrates WNK1 with its substrates, OXSR1/OSR1 and STK39/SPAK, promoting WNK1-dependent phosphorylation and activation of downstream kinases OXSR1/OSR1 and STK39/SPAK. Following activation, OXSR1/OSR1 and STK39/SPAK catalyze phosphorylation of ion cotransporters SLC12A1/NKCC2, SLC12A2/NKCC1, SLC12A5/KCC2 and SLC12A6/KCC3, regulating their activity. Phosphorylation of Na-K-Cl cotransporters SLC12A2/NKCC1 and SLC12A2/NKCC1 promote their activation and ion influx; simultaneously, phosphorylation of K-Cl cotransporters SLC12A5/KCC2 and SLC12A6/KCC3 inhibit their activity, blocking ion efflux. Also acts as a regulator of angiogenesis in endothelial cells via activation of OXSR1/OSR1 and STK39/SPAK: activation of OXSR1/OSR1 regulates chemotaxis and invasion, while STK39/SPAK regulates endothelial cell proliferation. Also acts independently of the WNK1-SPAK/OSR1 kinase cascade by catalyzing phosphorylation of other substrates, such as SYT2, PCF11 and NEDD4L (By similarity). Mediates phosphorylation of SYT2, regulating SYT2 association with phospholipids and membrane-binding (By similarity). Regulates mRNA export in the nucleus by mediating phosphorylation of PCF11, thereby decreasing the association between PCF11 and POLR2A/RNA polymerase II and promoting mRNA export to the cytoplasm. Acts as a negative regulator of autophagy. Required for the abscission step during mitosis, independently of the WNK1-SPAK/OSR1 kinase cascade. May also play a role in actin cytoskeletal reorganization (By similarity). Also acts as a scaffold protein independently of its protein kinase activity: negatively regulates cell membrane localization of various transporters and channels, such as SLC4A4, SLC26A6, SLC26A9, TRPV4 and CFTR (By similarity). Involved in the regulation of epithelial Na(+) channel (ENaC) by promoting activation of SGK1 in a kinase-independent manner: probably acts as a scaffold protein that promotes the recruitment of SGK1 to the mTORC2 complex in response to chloride, leading to mTORC2-dependent phosphorylation and activation of SGK1. Acts as an assembly factor for the ER membrane protein complex independently of its protein kinase activity: associates with EMC2 in the cytoplasm via its amphipathic alpha-helix, and prevents EMC2 ubiquitination and subsequent degradation, thereby promoting EMC2 stabilization (By similarity).</text>
</comment>
<comment type="catalytic activity">
    <reaction evidence="3">
        <text>L-seryl-[protein] + ATP = O-phospho-L-seryl-[protein] + ADP + H(+)</text>
        <dbReference type="Rhea" id="RHEA:17989"/>
        <dbReference type="Rhea" id="RHEA-COMP:9863"/>
        <dbReference type="Rhea" id="RHEA-COMP:11604"/>
        <dbReference type="ChEBI" id="CHEBI:15378"/>
        <dbReference type="ChEBI" id="CHEBI:29999"/>
        <dbReference type="ChEBI" id="CHEBI:30616"/>
        <dbReference type="ChEBI" id="CHEBI:83421"/>
        <dbReference type="ChEBI" id="CHEBI:456216"/>
        <dbReference type="EC" id="2.7.11.1"/>
    </reaction>
</comment>
<comment type="catalytic activity">
    <reaction evidence="3">
        <text>L-threonyl-[protein] + ATP = O-phospho-L-threonyl-[protein] + ADP + H(+)</text>
        <dbReference type="Rhea" id="RHEA:46608"/>
        <dbReference type="Rhea" id="RHEA-COMP:11060"/>
        <dbReference type="Rhea" id="RHEA-COMP:11605"/>
        <dbReference type="ChEBI" id="CHEBI:15378"/>
        <dbReference type="ChEBI" id="CHEBI:30013"/>
        <dbReference type="ChEBI" id="CHEBI:30616"/>
        <dbReference type="ChEBI" id="CHEBI:61977"/>
        <dbReference type="ChEBI" id="CHEBI:456216"/>
        <dbReference type="EC" id="2.7.11.1"/>
    </reaction>
</comment>
<comment type="cofactor">
    <cofactor evidence="3">
        <name>Mg(2+)</name>
        <dbReference type="ChEBI" id="CHEBI:18420"/>
    </cofactor>
</comment>
<comment type="activity regulation">
    <text evidence="3 4">Activated in response to hyperosmotic stress: cell shrinkage promotes formation of a membraneless compartment that concentrates WNK1 with its substrates, OXSR1/OSR1 and STK39/SPAK. Activation requires autophosphorylation of Ser-380 and, to a lower extent, Ser-376 (By similarity). Autophosphorylation and subsequent activation is inhibited by increases in intracellular ionic strength: Cl(-) potently inhibits WNK1 kinase activity via direct binding. Also inhibited by K(+) ions (By similarity).</text>
</comment>
<comment type="subunit">
    <text evidence="3 4">Interacts with WNK3. Interacts with WNK4; inhibiting the activity of WNK4 (By similarity). Interacts with SGK1; promoting its activation. Associates with the mTORC2 complex. Interacts with UVRAG. Interacts (via amphipathic alpha-helix region) with EMC2; promoting the ER membrane protein complex assembly (By similarity).</text>
</comment>
<comment type="subcellular location">
    <subcellularLocation>
        <location evidence="3">Cytoplasm</location>
    </subcellularLocation>
    <subcellularLocation>
        <location evidence="3">Nucleus</location>
    </subcellularLocation>
    <subcellularLocation>
        <location evidence="3">Cytoplasm</location>
        <location evidence="3">Cytoskeleton</location>
        <location evidence="3">Spindle</location>
    </subcellularLocation>
    <text evidence="3">Mediates formation and localizes to cytoplasmic membraneless compartment in response to hyperosmotic stress. Also localizes to the nucleus. Localizes to the mitotic spindle during mitosis.</text>
</comment>
<comment type="domain">
    <text evidence="3">Disordered regions undergo liquid-liquid phase separation (LLPS) for the formation of a cytoplasmic membraneless compartment that concentrates WNK1 with its substrates, OXSR1/OSR1 and STK39/SPAK.</text>
</comment>
<comment type="domain">
    <text evidence="3">The RFXV motifs mediate recognition with downstream kinases OXSR1/OSR1 and STK39/SPAK.</text>
</comment>
<comment type="PTM">
    <text evidence="3 4">Autophosphorylated at Ser-376 and Ser-380, promoting its activity (By similarity). Autophosphorylation at Ser-380 is inhibited by intracellular calcium. Phosphorylation at Thr-60 increases ability to activate SGK1 (By similarity).</text>
</comment>
<comment type="PTM">
    <text evidence="3">Ubiquitinated by the BCR(KLHL3) complex, leading to its degradation. Also ubiquitinated by the BCR(KLHL2) complex.</text>
</comment>
<comment type="similarity">
    <text evidence="5">Belongs to the protein kinase superfamily. Ser/Thr protein kinase family. WNK subfamily.</text>
</comment>
<comment type="caution">
    <text evidence="9">HSN2 was originally thought to be an intronless gene lying within a WNK1 gene intron. However, it is most probably an alternative exon which has been also described in alternative splicing products of the human and mouse WNK1 genes. Isoforms bearing this exon are specifically expressed in the nervous system in these species.</text>
</comment>
<comment type="sequence caution" evidence="8">
    <conflict type="miscellaneous discrepancy">
        <sequence resource="EMBL-CDS" id="AAS86809"/>
    </conflict>
    <text>Probable cloning artifact.</text>
</comment>
<gene>
    <name evidence="3" type="primary">WNK1</name>
    <name evidence="7" type="synonym">HSN2</name>
</gene>
<protein>
    <recommendedName>
        <fullName evidence="8">Serine/threonine-protein kinase WNK1</fullName>
        <ecNumber evidence="3">2.7.11.1</ecNumber>
    </recommendedName>
</protein>
<organism>
    <name type="scientific">Sus scrofa</name>
    <name type="common">Pig</name>
    <dbReference type="NCBI Taxonomy" id="9823"/>
    <lineage>
        <taxon>Eukaryota</taxon>
        <taxon>Metazoa</taxon>
        <taxon>Chordata</taxon>
        <taxon>Craniata</taxon>
        <taxon>Vertebrata</taxon>
        <taxon>Euteleostomi</taxon>
        <taxon>Mammalia</taxon>
        <taxon>Eutheria</taxon>
        <taxon>Laurasiatheria</taxon>
        <taxon>Artiodactyla</taxon>
        <taxon>Suina</taxon>
        <taxon>Suidae</taxon>
        <taxon>Sus</taxon>
    </lineage>
</organism>
<sequence>MSGGGADQQSSPPGSLFLSPPAPAPKNGSSSDSSVGEKLGAAAADAGAGRTEEYRRRRHTMDKDSRGAAATTTTEHRFFRRSVICDSNATALELPGLPLPLPQPGAAAVAQQRSPPEPHREETLTPAVAHVAQQPPAAATPGEPAAAVPAAASAPGSASRDRQVAQPSQAGSKEEPPSARSGSGGGSAKEPQEERSQQQDDIEELETKAVGMSNDGRFLKFDIEIGRGSFKTVYKGLDTETTVEVAWCELQDRKLTKSERQRFKEEAEMLKGLQHPNIVRFYDSWESTVKGKKCIVLVTELMTSGTLKTYLKRFKVMKIKVLRSWCRQILKGLQFLHTRTPPIIHRDLKCDNIFITGPTGSVKIGDLGLATLKRASFAKSVIGTPEFMAPEMYEEKYDESVDVYAFGMCMLEMATSEYPYSECQNAAQIYRRVTSGVKPASFDKVAIPEVKEIIEGCIRQNKDERYSIKDLLNHAFFQEETGVRVELAEEDDGEKIAIKLWLRIEDIKKLKGKYKDNEAIEFSFDLERDVPEDVAQEMVESGYVCEGDHKTMAKAIKDRVSLIKRKREQRQLVREEQEKRKQEESSLKQQGEQQSSASQAGILQPSSASTGLPAAATTSASVSTQVEPEEPEADQHQQLQYQQPSISVLSDGTVDSGQGSSVFTESRVSSQQTVSYGSQHEQAHSTCTLPGHTASVVQAQAQPHGGYPPSSMAQGQSQGQPSSSSLTGIPSSQPVQHSQQQQGVQQTAPSQQTVQYSLPQTSAPSEPTTAQPASQPQPPQVLPPVSAGKQLPVSQPVPTIQGEPQISVATQPSVVPVHSGAHFLPVGQPLPPSLLPQYPVSQVPSAPHVSAAQPGFSPLPVTAAAGVNQPLLTLASSAAAAAVPGGSTVVPSQLPTLLQPVTQLPSQAHPQLLQTAVQSMGIPANLGQTAEAPLPSGDVLYQGFPPRLPPQYPGDSNIAPSSSVASVCIPSTVLSPPRPTEALAAPGYFPTVVQSYAESNLLVPVGSIGGQIQVSQPAVSLAQAPTTSSQQAALESTQGVSQVAPPEPVPAAPPQPTQPTTLVSSIDRSAHSDVASGMSDGNENVPSSSGRHEGRTIKRHYRKSVRSRSRHEKTSRPKLRILNVSNKGDRVVECQLETHNRKMVTFKFDLDGDNPEEIATIMVNNDFILAIEREAFVDQVREIIEKADEMLSEDVSVEPEGDQGLENLQGKDDYGFSGSQKLEGEFKQPIPASSMPQQIAGLPTSSLTQVVHSAGRRFIVSPVPESRLRESKVFTSEISDTVAASTSPGTGMNLSHSASSLSLQQAFSELRRAQMTEGPSTAPPHFSHTGPTFPVVPPSMSSIAGAAATPSVSVPATSCPFSDISTSVTPSEVTASTEKGIAGVATCTGVISSSGLTVPPASDSPILSSVVSSITVPVAVSVSTTSLSVQAPTPGSIVSNTGTFPSISVAMTSASAVSSTAAPGAKPPPVSSQQVSGSTAGITTLASVPTTAPAPSVASQPSLSLSSSTSAPTLAETIVVSAHSLDKASHSSTAGLALSLPASSSSASPAAGVSSSVSQPGVAHPLVIPSAVASIPVLSQAGPTCAPLLPQVPGIPPLVQPAASVPAVQQTLVHSQPQPALLPNQPHTHCPEMDADAQPRAPGIDDIKTLEEKLRSLFSEHSSSGTQHASVSLETSLVVETTVTPGIPTTAVAPGKLMTSTTSTCLPPTSLPLGTTGLSILPVVTPGQVSTPVSTIPAVKPGTAPSKPPSTKPPVLPLGTELPAGTPPSEQLPPFPGPSLMQAQQPLEDLDAQLRRTLSPETVVLTSTVGPVSVVAPTAAVEAGAQLQKDVSQVTEGPIPAPTSGTGVFQMGRFQVSVAMDDTQKEGKNKSEDVKSVHFESSTSESSVLSSSSPESTLVKPEPNGTAIRGISSDMPDSAHKTSASEAKSEAGQPTKVGRFQVTTTADKVGRFSVSRTEDAIAEAKKEGPVASPPFMDLEHSILPAVIPKKEKPELSEPSHLNGPSSDLEAAFLSRDGDDGSGSPHSPPQLCSKSLPIQSLSQSLSNSFNSSYMSSDNESDIEDEDLKLELRRLREKHLKEIQDLQSRQKHEIESLYTRLGKAPPAVIIPAAAPLAGRRRRPTKSKGSKSSRSSSLGNKSPGPAGNLSGQSTATVLHPQQTLPAPGNIPETGQNQLLQPLKPSPSSDNLYSAFTSDGAISVPSLSAPGQGTSSTNTVGGTVSSQAAQAQPPTMTSSRKGTFTDDLHKLVDNWARDAMNLSGRRGSKGHMSYEGPGMARKFSAPGQLCISMTSNLGGSAPISAASATSLGHFTKSMCPPQQYGFPAPPFGTQWSGTGGPAPQPLSQFQPVGTASLQNFNISNLQKSISNPPGSNLRTT</sequence>
<evidence type="ECO:0000250" key="1">
    <source>
        <dbReference type="UniProtKB" id="P83741"/>
    </source>
</evidence>
<evidence type="ECO:0000250" key="2">
    <source>
        <dbReference type="UniProtKB" id="Q96J92"/>
    </source>
</evidence>
<evidence type="ECO:0000250" key="3">
    <source>
        <dbReference type="UniProtKB" id="Q9H4A3"/>
    </source>
</evidence>
<evidence type="ECO:0000250" key="4">
    <source>
        <dbReference type="UniProtKB" id="Q9JIH7"/>
    </source>
</evidence>
<evidence type="ECO:0000255" key="5">
    <source>
        <dbReference type="PROSITE-ProRule" id="PRU00159"/>
    </source>
</evidence>
<evidence type="ECO:0000256" key="6">
    <source>
        <dbReference type="SAM" id="MobiDB-lite"/>
    </source>
</evidence>
<evidence type="ECO:0000303" key="7">
    <source>
    </source>
</evidence>
<evidence type="ECO:0000305" key="8"/>
<evidence type="ECO:0000305" key="9">
    <source>
    </source>
</evidence>
<accession>Q6R2V0</accession>
<accession>F1SHS6</accession>
<name>WNK1_PIG</name>